<keyword id="KW-0150">Chloroplast</keyword>
<keyword id="KW-0934">Plastid</keyword>
<keyword id="KW-0687">Ribonucleoprotein</keyword>
<keyword id="KW-0689">Ribosomal protein</keyword>
<keyword id="KW-0694">RNA-binding</keyword>
<keyword id="KW-0699">rRNA-binding</keyword>
<organism>
    <name type="scientific">Guillardia theta</name>
    <name type="common">Cryptophyte</name>
    <name type="synonym">Cryptomonas phi</name>
    <dbReference type="NCBI Taxonomy" id="55529"/>
    <lineage>
        <taxon>Eukaryota</taxon>
        <taxon>Cryptophyceae</taxon>
        <taxon>Pyrenomonadales</taxon>
        <taxon>Geminigeraceae</taxon>
        <taxon>Guillardia</taxon>
    </lineage>
</organism>
<name>RR5_GUITH</name>
<proteinExistence type="inferred from homology"/>
<evidence type="ECO:0000250" key="1"/>
<evidence type="ECO:0000305" key="2"/>
<geneLocation type="chloroplast"/>
<protein>
    <recommendedName>
        <fullName evidence="2">Small ribosomal subunit protein uS5c</fullName>
    </recommendedName>
    <alternativeName>
        <fullName>30S ribosomal protein S5, chloroplastic</fullName>
    </alternativeName>
</protein>
<gene>
    <name type="primary">rps5</name>
</gene>
<comment type="function">
    <text evidence="1">With S4 and S12 plays an important role in translational accuracy.</text>
</comment>
<comment type="subunit">
    <text evidence="1">Part of the 30S ribosomal subunit. Contacts protein S4 (By similarity).</text>
</comment>
<comment type="subcellular location">
    <subcellularLocation>
        <location>Plastid</location>
        <location>Chloroplast</location>
    </subcellularLocation>
</comment>
<comment type="domain">
    <text>The N-terminal domain interacts with the head of the 30S subunit; the C-terminal domain interacts with the body and contacts protein S4. The interaction surface between S4 and S5 is involved in control of translational fidelity.</text>
</comment>
<comment type="similarity">
    <text evidence="2">Belongs to the universal ribosomal protein uS5 family.</text>
</comment>
<accession>O46910</accession>
<feature type="chain" id="PRO_0000131668" description="Small ribosomal subunit protein uS5c">
    <location>
        <begin position="1"/>
        <end position="169"/>
    </location>
</feature>
<feature type="domain" description="S5 DRBM">
    <location>
        <begin position="17"/>
        <end position="80"/>
    </location>
</feature>
<reference key="1">
    <citation type="journal article" date="1997" name="Biochem. Mol. Biol. Int.">
        <title>The large ribosomal protein gene cluster of a cryptomonad plastid: gene organization, sequence and evolutionary implications.</title>
        <authorList>
            <person name="Wang S.L."/>
            <person name="Liu X.-Q."/>
            <person name="Douglas S.E."/>
        </authorList>
    </citation>
    <scope>NUCLEOTIDE SEQUENCE [GENOMIC DNA]</scope>
</reference>
<reference key="2">
    <citation type="journal article" date="1999" name="J. Mol. Evol.">
        <title>The plastid genome of the cryptophyte alga, Guillardia theta: complete sequence and conserved synteny groups confirm its common ancestry with red algae.</title>
        <authorList>
            <person name="Douglas S.E."/>
            <person name="Penny S.L."/>
        </authorList>
    </citation>
    <scope>NUCLEOTIDE SEQUENCE [LARGE SCALE GENOMIC DNA]</scope>
</reference>
<sequence>MLNAKKSNKTKEKETDWQERVIQVRRVTKVVKGGKKLSFRAIIILGNERGQVGVGVGKASDVIGAVKKAVTDGRKNLINIPLTNQNSIPHIVQGYSGAAKVIIKPSAPGSGVIAGGSVRTILELAGIKNILAKQLGSSNPLNNARAAANALINLRTYTSVLNDRNLDLH</sequence>
<dbReference type="EMBL" id="AF041468">
    <property type="protein sequence ID" value="AAC35719.1"/>
    <property type="molecule type" value="Genomic_DNA"/>
</dbReference>
<dbReference type="RefSeq" id="NP_050785.1">
    <property type="nucleotide sequence ID" value="NC_000926.1"/>
</dbReference>
<dbReference type="SMR" id="O46910"/>
<dbReference type="GeneID" id="857093"/>
<dbReference type="HOGENOM" id="CLU_065898_2_2_1"/>
<dbReference type="OMA" id="FGLHCNP"/>
<dbReference type="GO" id="GO:0009507">
    <property type="term" value="C:chloroplast"/>
    <property type="evidence" value="ECO:0007669"/>
    <property type="project" value="UniProtKB-SubCell"/>
</dbReference>
<dbReference type="GO" id="GO:0015935">
    <property type="term" value="C:small ribosomal subunit"/>
    <property type="evidence" value="ECO:0007669"/>
    <property type="project" value="InterPro"/>
</dbReference>
<dbReference type="GO" id="GO:0019843">
    <property type="term" value="F:rRNA binding"/>
    <property type="evidence" value="ECO:0007669"/>
    <property type="project" value="UniProtKB-UniRule"/>
</dbReference>
<dbReference type="GO" id="GO:0003735">
    <property type="term" value="F:structural constituent of ribosome"/>
    <property type="evidence" value="ECO:0007669"/>
    <property type="project" value="InterPro"/>
</dbReference>
<dbReference type="GO" id="GO:0006412">
    <property type="term" value="P:translation"/>
    <property type="evidence" value="ECO:0007669"/>
    <property type="project" value="UniProtKB-UniRule"/>
</dbReference>
<dbReference type="FunFam" id="3.30.160.20:FF:000001">
    <property type="entry name" value="30S ribosomal protein S5"/>
    <property type="match status" value="1"/>
</dbReference>
<dbReference type="FunFam" id="3.30.230.10:FF:000002">
    <property type="entry name" value="30S ribosomal protein S5"/>
    <property type="match status" value="1"/>
</dbReference>
<dbReference type="Gene3D" id="3.30.160.20">
    <property type="match status" value="1"/>
</dbReference>
<dbReference type="Gene3D" id="3.30.230.10">
    <property type="match status" value="1"/>
</dbReference>
<dbReference type="HAMAP" id="MF_01307_B">
    <property type="entry name" value="Ribosomal_uS5_B"/>
    <property type="match status" value="1"/>
</dbReference>
<dbReference type="InterPro" id="IPR020568">
    <property type="entry name" value="Ribosomal_Su5_D2-typ_SF"/>
</dbReference>
<dbReference type="InterPro" id="IPR000851">
    <property type="entry name" value="Ribosomal_uS5"/>
</dbReference>
<dbReference type="InterPro" id="IPR005712">
    <property type="entry name" value="Ribosomal_uS5_bac-type"/>
</dbReference>
<dbReference type="InterPro" id="IPR005324">
    <property type="entry name" value="Ribosomal_uS5_C"/>
</dbReference>
<dbReference type="InterPro" id="IPR013810">
    <property type="entry name" value="Ribosomal_uS5_N"/>
</dbReference>
<dbReference type="InterPro" id="IPR018192">
    <property type="entry name" value="Ribosomal_uS5_N_CS"/>
</dbReference>
<dbReference type="InterPro" id="IPR014721">
    <property type="entry name" value="Ribsml_uS5_D2-typ_fold_subgr"/>
</dbReference>
<dbReference type="NCBIfam" id="TIGR01021">
    <property type="entry name" value="rpsE_bact"/>
    <property type="match status" value="1"/>
</dbReference>
<dbReference type="PANTHER" id="PTHR48277">
    <property type="entry name" value="MITOCHONDRIAL RIBOSOMAL PROTEIN S5"/>
    <property type="match status" value="1"/>
</dbReference>
<dbReference type="PANTHER" id="PTHR48277:SF1">
    <property type="entry name" value="MITOCHONDRIAL RIBOSOMAL PROTEIN S5"/>
    <property type="match status" value="1"/>
</dbReference>
<dbReference type="Pfam" id="PF00333">
    <property type="entry name" value="Ribosomal_S5"/>
    <property type="match status" value="1"/>
</dbReference>
<dbReference type="Pfam" id="PF03719">
    <property type="entry name" value="Ribosomal_S5_C"/>
    <property type="match status" value="1"/>
</dbReference>
<dbReference type="SUPFAM" id="SSF54768">
    <property type="entry name" value="dsRNA-binding domain-like"/>
    <property type="match status" value="1"/>
</dbReference>
<dbReference type="SUPFAM" id="SSF54211">
    <property type="entry name" value="Ribosomal protein S5 domain 2-like"/>
    <property type="match status" value="1"/>
</dbReference>
<dbReference type="PROSITE" id="PS00585">
    <property type="entry name" value="RIBOSOMAL_S5"/>
    <property type="match status" value="1"/>
</dbReference>
<dbReference type="PROSITE" id="PS50881">
    <property type="entry name" value="S5_DSRBD"/>
    <property type="match status" value="1"/>
</dbReference>